<reference key="1">
    <citation type="journal article" date="2009" name="Science">
        <title>The dynamics and time scale of ongoing genomic erosion in symbiotic bacteria.</title>
        <authorList>
            <person name="Moran N.A."/>
            <person name="McLaughlin H.J."/>
            <person name="Sorek R."/>
        </authorList>
    </citation>
    <scope>NUCLEOTIDE SEQUENCE [LARGE SCALE GENOMIC DNA]</scope>
    <source>
        <strain>Tuc7</strain>
    </source>
</reference>
<comment type="catalytic activity">
    <reaction evidence="1">
        <text>tRNA(Gly) + glycine + ATP = glycyl-tRNA(Gly) + AMP + diphosphate</text>
        <dbReference type="Rhea" id="RHEA:16013"/>
        <dbReference type="Rhea" id="RHEA-COMP:9664"/>
        <dbReference type="Rhea" id="RHEA-COMP:9683"/>
        <dbReference type="ChEBI" id="CHEBI:30616"/>
        <dbReference type="ChEBI" id="CHEBI:33019"/>
        <dbReference type="ChEBI" id="CHEBI:57305"/>
        <dbReference type="ChEBI" id="CHEBI:78442"/>
        <dbReference type="ChEBI" id="CHEBI:78522"/>
        <dbReference type="ChEBI" id="CHEBI:456215"/>
        <dbReference type="EC" id="6.1.1.14"/>
    </reaction>
</comment>
<comment type="subunit">
    <text evidence="1">Tetramer of two alpha and two beta subunits.</text>
</comment>
<comment type="subcellular location">
    <subcellularLocation>
        <location evidence="1">Cytoplasm</location>
    </subcellularLocation>
</comment>
<comment type="similarity">
    <text evidence="1">Belongs to the class-II aminoacyl-tRNA synthetase family.</text>
</comment>
<protein>
    <recommendedName>
        <fullName evidence="1">Glycine--tRNA ligase beta subunit</fullName>
        <ecNumber evidence="1">6.1.1.14</ecNumber>
    </recommendedName>
    <alternativeName>
        <fullName evidence="1">Glycyl-tRNA synthetase beta subunit</fullName>
        <shortName evidence="1">GlyRS</shortName>
    </alternativeName>
</protein>
<evidence type="ECO:0000255" key="1">
    <source>
        <dbReference type="HAMAP-Rule" id="MF_00255"/>
    </source>
</evidence>
<name>SYGB_BUCAT</name>
<organism>
    <name type="scientific">Buchnera aphidicola subsp. Acyrthosiphon pisum (strain Tuc7)</name>
    <dbReference type="NCBI Taxonomy" id="561501"/>
    <lineage>
        <taxon>Bacteria</taxon>
        <taxon>Pseudomonadati</taxon>
        <taxon>Pseudomonadota</taxon>
        <taxon>Gammaproteobacteria</taxon>
        <taxon>Enterobacterales</taxon>
        <taxon>Erwiniaceae</taxon>
        <taxon>Buchnera</taxon>
    </lineage>
</organism>
<accession>B8D740</accession>
<keyword id="KW-0030">Aminoacyl-tRNA synthetase</keyword>
<keyword id="KW-0067">ATP-binding</keyword>
<keyword id="KW-0963">Cytoplasm</keyword>
<keyword id="KW-0436">Ligase</keyword>
<keyword id="KW-0547">Nucleotide-binding</keyword>
<keyword id="KW-0648">Protein biosynthesis</keyword>
<proteinExistence type="inferred from homology"/>
<gene>
    <name evidence="1" type="primary">glyS</name>
    <name type="ordered locus">BUAPTUC7_134</name>
</gene>
<dbReference type="EC" id="6.1.1.14" evidence="1"/>
<dbReference type="EMBL" id="CP001158">
    <property type="protein sequence ID" value="ACL29955.1"/>
    <property type="molecule type" value="Genomic_DNA"/>
</dbReference>
<dbReference type="RefSeq" id="WP_012619444.1">
    <property type="nucleotide sequence ID" value="NC_011834.1"/>
</dbReference>
<dbReference type="SMR" id="B8D740"/>
<dbReference type="KEGG" id="bau:BUAPTUC7_134"/>
<dbReference type="HOGENOM" id="CLU_007220_2_2_6"/>
<dbReference type="GO" id="GO:0005829">
    <property type="term" value="C:cytosol"/>
    <property type="evidence" value="ECO:0007669"/>
    <property type="project" value="TreeGrafter"/>
</dbReference>
<dbReference type="GO" id="GO:0004814">
    <property type="term" value="F:arginine-tRNA ligase activity"/>
    <property type="evidence" value="ECO:0007669"/>
    <property type="project" value="InterPro"/>
</dbReference>
<dbReference type="GO" id="GO:0005524">
    <property type="term" value="F:ATP binding"/>
    <property type="evidence" value="ECO:0007669"/>
    <property type="project" value="UniProtKB-UniRule"/>
</dbReference>
<dbReference type="GO" id="GO:0004820">
    <property type="term" value="F:glycine-tRNA ligase activity"/>
    <property type="evidence" value="ECO:0007669"/>
    <property type="project" value="UniProtKB-UniRule"/>
</dbReference>
<dbReference type="GO" id="GO:0006420">
    <property type="term" value="P:arginyl-tRNA aminoacylation"/>
    <property type="evidence" value="ECO:0007669"/>
    <property type="project" value="InterPro"/>
</dbReference>
<dbReference type="GO" id="GO:0006426">
    <property type="term" value="P:glycyl-tRNA aminoacylation"/>
    <property type="evidence" value="ECO:0007669"/>
    <property type="project" value="UniProtKB-UniRule"/>
</dbReference>
<dbReference type="HAMAP" id="MF_00255">
    <property type="entry name" value="Gly_tRNA_synth_beta"/>
    <property type="match status" value="1"/>
</dbReference>
<dbReference type="InterPro" id="IPR008909">
    <property type="entry name" value="DALR_anticod-bd"/>
</dbReference>
<dbReference type="InterPro" id="IPR015944">
    <property type="entry name" value="Gly-tRNA-synth_bsu"/>
</dbReference>
<dbReference type="InterPro" id="IPR006194">
    <property type="entry name" value="Gly-tRNA-synth_heterodimer"/>
</dbReference>
<dbReference type="NCBIfam" id="TIGR00211">
    <property type="entry name" value="glyS"/>
    <property type="match status" value="1"/>
</dbReference>
<dbReference type="PANTHER" id="PTHR30075:SF2">
    <property type="entry name" value="GLYCINE--TRNA LIGASE, CHLOROPLASTIC_MITOCHONDRIAL 2"/>
    <property type="match status" value="1"/>
</dbReference>
<dbReference type="PANTHER" id="PTHR30075">
    <property type="entry name" value="GLYCYL-TRNA SYNTHETASE"/>
    <property type="match status" value="1"/>
</dbReference>
<dbReference type="Pfam" id="PF05746">
    <property type="entry name" value="DALR_1"/>
    <property type="match status" value="1"/>
</dbReference>
<dbReference type="Pfam" id="PF02092">
    <property type="entry name" value="tRNA_synt_2f"/>
    <property type="match status" value="1"/>
</dbReference>
<dbReference type="PRINTS" id="PR01045">
    <property type="entry name" value="TRNASYNTHGB"/>
</dbReference>
<dbReference type="SUPFAM" id="SSF109604">
    <property type="entry name" value="HD-domain/PDEase-like"/>
    <property type="match status" value="1"/>
</dbReference>
<dbReference type="PROSITE" id="PS50861">
    <property type="entry name" value="AA_TRNA_LIGASE_II_GLYAB"/>
    <property type="match status" value="1"/>
</dbReference>
<feature type="chain" id="PRO_1000197171" description="Glycine--tRNA ligase beta subunit">
    <location>
        <begin position="1"/>
        <end position="690"/>
    </location>
</feature>
<sequence length="690" mass="80860">MTKKILLIEIGTEELPARLLSKISLYFYKNFIKELDFHNISYKNIKYFSTPRRLALKIKDIDITERFVEIKKRGPSIINSYDKDGFLTEAATRWLKHCGININQAIRLKNEKGEWLFYKTRKKQENIESLIPKITESALKNISIKKSMRWGQDNQKFSRPIRNIVILLDKKVIPGDVFNITSKNLLQNHLSLKDSQIKIKDAKDYPKILLEKNNIIADYFIRKEKIIEDIENIAKKIKGFIKKNNVLIEEVTALVESPKALLVNFQEKFLQIPKKILINTIEKKQKCFPIYNSEKKLLPYFIFISNIQTQESEKIIIGNQRVMHARLSDAEFFFKNDRKVKLESRLLSLKKVLFQNNLGSLYEKTLRIKLLIKWIAKYSSSDVEDSIRAALLSKCDLVTDVVCEFPELQGKIGMYYALEDKEKKDVATALEEQYLPRFSGDKLPCTLIGCGLSIADKMDTLSGMFYIGNIPSSDKDPFALRRLAIGIIRIILEKNIPLNLEDLIKKSLSLYNKKNEEDLILFDKMIKFFMIRLFHWYEETGYSAKIIKSVLSCKSIELIDIHKKIQAISFFKKLKDSQSIILSIKRISNILAKEKEKINGDINKKLMIEKEEIILFNNIEEFDNYTKNLFLEKKYNDILIKIKSFENPIYNFFKKVKIYHSDSKIRLNRLLLLSKLKKIFFKIADFSYLY</sequence>